<accession>Q02Y20</accession>
<reference key="1">
    <citation type="journal article" date="2006" name="Proc. Natl. Acad. Sci. U.S.A.">
        <title>Comparative genomics of the lactic acid bacteria.</title>
        <authorList>
            <person name="Makarova K.S."/>
            <person name="Slesarev A."/>
            <person name="Wolf Y.I."/>
            <person name="Sorokin A."/>
            <person name="Mirkin B."/>
            <person name="Koonin E.V."/>
            <person name="Pavlov A."/>
            <person name="Pavlova N."/>
            <person name="Karamychev V."/>
            <person name="Polouchine N."/>
            <person name="Shakhova V."/>
            <person name="Grigoriev I."/>
            <person name="Lou Y."/>
            <person name="Rohksar D."/>
            <person name="Lucas S."/>
            <person name="Huang K."/>
            <person name="Goodstein D.M."/>
            <person name="Hawkins T."/>
            <person name="Plengvidhya V."/>
            <person name="Welker D."/>
            <person name="Hughes J."/>
            <person name="Goh Y."/>
            <person name="Benson A."/>
            <person name="Baldwin K."/>
            <person name="Lee J.-H."/>
            <person name="Diaz-Muniz I."/>
            <person name="Dosti B."/>
            <person name="Smeianov V."/>
            <person name="Wechter W."/>
            <person name="Barabote R."/>
            <person name="Lorca G."/>
            <person name="Altermann E."/>
            <person name="Barrangou R."/>
            <person name="Ganesan B."/>
            <person name="Xie Y."/>
            <person name="Rawsthorne H."/>
            <person name="Tamir D."/>
            <person name="Parker C."/>
            <person name="Breidt F."/>
            <person name="Broadbent J.R."/>
            <person name="Hutkins R."/>
            <person name="O'Sullivan D."/>
            <person name="Steele J."/>
            <person name="Unlu G."/>
            <person name="Saier M.H. Jr."/>
            <person name="Klaenhammer T."/>
            <person name="Richardson P."/>
            <person name="Kozyavkin S."/>
            <person name="Weimer B.C."/>
            <person name="Mills D.A."/>
        </authorList>
    </citation>
    <scope>NUCLEOTIDE SEQUENCE [LARGE SCALE GENOMIC DNA]</scope>
    <source>
        <strain>SK11</strain>
    </source>
</reference>
<sequence length="260" mass="28615">MILNKIKVVVAGFRGKMGSTAVQMILNAPNFELVALLGRKEEVSEAFDVPVFNRKEELENIEADVWLDLTAPEVAYENAYFALEHGLKPVVGTTGFTEDEVARLIKFSREKELGGLIAPNFALGAVLLMQFSKQAVKYFPDVEIIELHHDGKKDAPSGTAVKTAELMAEERLAHHQGAVDEKESLVGARGAVLEGMRIHSVRLPGLVAHQEVIFGSKGEGLTLRHDSYDRSSFMTGIALGIRKVMTVSELKYGLEHFLDL</sequence>
<organism>
    <name type="scientific">Lactococcus lactis subsp. cremoris (strain SK11)</name>
    <dbReference type="NCBI Taxonomy" id="272622"/>
    <lineage>
        <taxon>Bacteria</taxon>
        <taxon>Bacillati</taxon>
        <taxon>Bacillota</taxon>
        <taxon>Bacilli</taxon>
        <taxon>Lactobacillales</taxon>
        <taxon>Streptococcaceae</taxon>
        <taxon>Lactococcus</taxon>
        <taxon>Lactococcus cremoris subsp. cremoris</taxon>
    </lineage>
</organism>
<comment type="function">
    <text evidence="1">Catalyzes the conversion of 4-hydroxy-tetrahydrodipicolinate (HTPA) to tetrahydrodipicolinate.</text>
</comment>
<comment type="catalytic activity">
    <reaction evidence="1">
        <text>(S)-2,3,4,5-tetrahydrodipicolinate + NAD(+) + H2O = (2S,4S)-4-hydroxy-2,3,4,5-tetrahydrodipicolinate + NADH + H(+)</text>
        <dbReference type="Rhea" id="RHEA:35323"/>
        <dbReference type="ChEBI" id="CHEBI:15377"/>
        <dbReference type="ChEBI" id="CHEBI:15378"/>
        <dbReference type="ChEBI" id="CHEBI:16845"/>
        <dbReference type="ChEBI" id="CHEBI:57540"/>
        <dbReference type="ChEBI" id="CHEBI:57945"/>
        <dbReference type="ChEBI" id="CHEBI:67139"/>
        <dbReference type="EC" id="1.17.1.8"/>
    </reaction>
</comment>
<comment type="catalytic activity">
    <reaction evidence="1">
        <text>(S)-2,3,4,5-tetrahydrodipicolinate + NADP(+) + H2O = (2S,4S)-4-hydroxy-2,3,4,5-tetrahydrodipicolinate + NADPH + H(+)</text>
        <dbReference type="Rhea" id="RHEA:35331"/>
        <dbReference type="ChEBI" id="CHEBI:15377"/>
        <dbReference type="ChEBI" id="CHEBI:15378"/>
        <dbReference type="ChEBI" id="CHEBI:16845"/>
        <dbReference type="ChEBI" id="CHEBI:57783"/>
        <dbReference type="ChEBI" id="CHEBI:58349"/>
        <dbReference type="ChEBI" id="CHEBI:67139"/>
        <dbReference type="EC" id="1.17.1.8"/>
    </reaction>
</comment>
<comment type="pathway">
    <text evidence="1">Amino-acid biosynthesis; L-lysine biosynthesis via DAP pathway; (S)-tetrahydrodipicolinate from L-aspartate: step 4/4.</text>
</comment>
<comment type="subcellular location">
    <subcellularLocation>
        <location evidence="1">Cytoplasm</location>
    </subcellularLocation>
</comment>
<comment type="similarity">
    <text evidence="1">Belongs to the DapB family.</text>
</comment>
<comment type="caution">
    <text evidence="2">Was originally thought to be a dihydrodipicolinate reductase (DHDPR), catalyzing the conversion of dihydrodipicolinate to tetrahydrodipicolinate. However, it was shown in E.coli that the substrate of the enzymatic reaction is not dihydrodipicolinate (DHDP) but in fact (2S,4S)-4-hydroxy-2,3,4,5-tetrahydrodipicolinic acid (HTPA), the product released by the DapA-catalyzed reaction.</text>
</comment>
<name>DAPB_LACLS</name>
<dbReference type="EC" id="1.17.1.8" evidence="1"/>
<dbReference type="EMBL" id="CP000425">
    <property type="protein sequence ID" value="ABJ73152.1"/>
    <property type="molecule type" value="Genomic_DNA"/>
</dbReference>
<dbReference type="RefSeq" id="WP_011676591.1">
    <property type="nucleotide sequence ID" value="NC_008527.1"/>
</dbReference>
<dbReference type="SMR" id="Q02Y20"/>
<dbReference type="KEGG" id="llc:LACR_1655"/>
<dbReference type="HOGENOM" id="CLU_047479_0_1_9"/>
<dbReference type="UniPathway" id="UPA00034">
    <property type="reaction ID" value="UER00018"/>
</dbReference>
<dbReference type="Proteomes" id="UP000000240">
    <property type="component" value="Chromosome"/>
</dbReference>
<dbReference type="GO" id="GO:0005829">
    <property type="term" value="C:cytosol"/>
    <property type="evidence" value="ECO:0007669"/>
    <property type="project" value="TreeGrafter"/>
</dbReference>
<dbReference type="GO" id="GO:0008839">
    <property type="term" value="F:4-hydroxy-tetrahydrodipicolinate reductase"/>
    <property type="evidence" value="ECO:0007669"/>
    <property type="project" value="UniProtKB-EC"/>
</dbReference>
<dbReference type="GO" id="GO:0051287">
    <property type="term" value="F:NAD binding"/>
    <property type="evidence" value="ECO:0007669"/>
    <property type="project" value="UniProtKB-UniRule"/>
</dbReference>
<dbReference type="GO" id="GO:0050661">
    <property type="term" value="F:NADP binding"/>
    <property type="evidence" value="ECO:0007669"/>
    <property type="project" value="UniProtKB-UniRule"/>
</dbReference>
<dbReference type="GO" id="GO:0016726">
    <property type="term" value="F:oxidoreductase activity, acting on CH or CH2 groups, NAD or NADP as acceptor"/>
    <property type="evidence" value="ECO:0007669"/>
    <property type="project" value="UniProtKB-UniRule"/>
</dbReference>
<dbReference type="GO" id="GO:0019877">
    <property type="term" value="P:diaminopimelate biosynthetic process"/>
    <property type="evidence" value="ECO:0007669"/>
    <property type="project" value="UniProtKB-UniRule"/>
</dbReference>
<dbReference type="GO" id="GO:0009089">
    <property type="term" value="P:lysine biosynthetic process via diaminopimelate"/>
    <property type="evidence" value="ECO:0007669"/>
    <property type="project" value="UniProtKB-UniRule"/>
</dbReference>
<dbReference type="CDD" id="cd02274">
    <property type="entry name" value="DHDPR_N"/>
    <property type="match status" value="1"/>
</dbReference>
<dbReference type="FunFam" id="3.30.360.10:FF:000009">
    <property type="entry name" value="4-hydroxy-tetrahydrodipicolinate reductase"/>
    <property type="match status" value="1"/>
</dbReference>
<dbReference type="Gene3D" id="3.30.360.10">
    <property type="entry name" value="Dihydrodipicolinate Reductase, domain 2"/>
    <property type="match status" value="1"/>
</dbReference>
<dbReference type="Gene3D" id="3.40.50.720">
    <property type="entry name" value="NAD(P)-binding Rossmann-like Domain"/>
    <property type="match status" value="1"/>
</dbReference>
<dbReference type="HAMAP" id="MF_00102">
    <property type="entry name" value="DapB"/>
    <property type="match status" value="1"/>
</dbReference>
<dbReference type="InterPro" id="IPR022663">
    <property type="entry name" value="DapB_C"/>
</dbReference>
<dbReference type="InterPro" id="IPR000846">
    <property type="entry name" value="DapB_N"/>
</dbReference>
<dbReference type="InterPro" id="IPR022664">
    <property type="entry name" value="DapB_N_CS"/>
</dbReference>
<dbReference type="InterPro" id="IPR023940">
    <property type="entry name" value="DHDPR_bac"/>
</dbReference>
<dbReference type="InterPro" id="IPR036291">
    <property type="entry name" value="NAD(P)-bd_dom_sf"/>
</dbReference>
<dbReference type="NCBIfam" id="TIGR00036">
    <property type="entry name" value="dapB"/>
    <property type="match status" value="1"/>
</dbReference>
<dbReference type="PANTHER" id="PTHR20836:SF0">
    <property type="entry name" value="4-HYDROXY-TETRAHYDRODIPICOLINATE REDUCTASE 1, CHLOROPLASTIC-RELATED"/>
    <property type="match status" value="1"/>
</dbReference>
<dbReference type="PANTHER" id="PTHR20836">
    <property type="entry name" value="DIHYDRODIPICOLINATE REDUCTASE"/>
    <property type="match status" value="1"/>
</dbReference>
<dbReference type="Pfam" id="PF05173">
    <property type="entry name" value="DapB_C"/>
    <property type="match status" value="1"/>
</dbReference>
<dbReference type="Pfam" id="PF01113">
    <property type="entry name" value="DapB_N"/>
    <property type="match status" value="1"/>
</dbReference>
<dbReference type="PIRSF" id="PIRSF000161">
    <property type="entry name" value="DHPR"/>
    <property type="match status" value="1"/>
</dbReference>
<dbReference type="SUPFAM" id="SSF55347">
    <property type="entry name" value="Glyceraldehyde-3-phosphate dehydrogenase-like, C-terminal domain"/>
    <property type="match status" value="1"/>
</dbReference>
<dbReference type="SUPFAM" id="SSF51735">
    <property type="entry name" value="NAD(P)-binding Rossmann-fold domains"/>
    <property type="match status" value="1"/>
</dbReference>
<dbReference type="PROSITE" id="PS01298">
    <property type="entry name" value="DAPB"/>
    <property type="match status" value="1"/>
</dbReference>
<proteinExistence type="inferred from homology"/>
<gene>
    <name evidence="1" type="primary">dapB</name>
    <name type="ordered locus">LACR_1655</name>
</gene>
<keyword id="KW-0028">Amino-acid biosynthesis</keyword>
<keyword id="KW-0963">Cytoplasm</keyword>
<keyword id="KW-0220">Diaminopimelate biosynthesis</keyword>
<keyword id="KW-0457">Lysine biosynthesis</keyword>
<keyword id="KW-0520">NAD</keyword>
<keyword id="KW-0521">NADP</keyword>
<keyword id="KW-0560">Oxidoreductase</keyword>
<feature type="chain" id="PRO_1000008576" description="4-hydroxy-tetrahydrodipicolinate reductase">
    <location>
        <begin position="1"/>
        <end position="260"/>
    </location>
</feature>
<feature type="active site" description="Proton donor/acceptor" evidence="1">
    <location>
        <position position="148"/>
    </location>
</feature>
<feature type="active site" description="Proton donor" evidence="1">
    <location>
        <position position="152"/>
    </location>
</feature>
<feature type="binding site" evidence="1">
    <location>
        <begin position="12"/>
        <end position="17"/>
    </location>
    <ligand>
        <name>NAD(+)</name>
        <dbReference type="ChEBI" id="CHEBI:57540"/>
    </ligand>
</feature>
<feature type="binding site" evidence="1">
    <location>
        <begin position="92"/>
        <end position="94"/>
    </location>
    <ligand>
        <name>NAD(+)</name>
        <dbReference type="ChEBI" id="CHEBI:57540"/>
    </ligand>
</feature>
<feature type="binding site" evidence="1">
    <location>
        <begin position="118"/>
        <end position="121"/>
    </location>
    <ligand>
        <name>NAD(+)</name>
        <dbReference type="ChEBI" id="CHEBI:57540"/>
    </ligand>
</feature>
<feature type="binding site" evidence="1">
    <location>
        <position position="149"/>
    </location>
    <ligand>
        <name>(S)-2,3,4,5-tetrahydrodipicolinate</name>
        <dbReference type="ChEBI" id="CHEBI:16845"/>
    </ligand>
</feature>
<feature type="binding site" evidence="1">
    <location>
        <begin position="158"/>
        <end position="159"/>
    </location>
    <ligand>
        <name>(S)-2,3,4,5-tetrahydrodipicolinate</name>
        <dbReference type="ChEBI" id="CHEBI:16845"/>
    </ligand>
</feature>
<evidence type="ECO:0000255" key="1">
    <source>
        <dbReference type="HAMAP-Rule" id="MF_00102"/>
    </source>
</evidence>
<evidence type="ECO:0000305" key="2"/>
<protein>
    <recommendedName>
        <fullName evidence="1">4-hydroxy-tetrahydrodipicolinate reductase</fullName>
        <shortName evidence="1">HTPA reductase</shortName>
        <ecNumber evidence="1">1.17.1.8</ecNumber>
    </recommendedName>
</protein>